<accession>Q01227</accession>
<accession>Q76ZL8</accession>
<dbReference type="EMBL" id="D11079">
    <property type="protein sequence ID" value="BAA01835.1"/>
    <property type="molecule type" value="Genomic_DNA"/>
</dbReference>
<dbReference type="EMBL" id="AY243312">
    <property type="protein sequence ID" value="AAO89466.1"/>
    <property type="molecule type" value="Genomic_DNA"/>
</dbReference>
<dbReference type="PIR" id="JQ1799">
    <property type="entry name" value="JQ1799"/>
</dbReference>
<dbReference type="RefSeq" id="YP_233069.1">
    <property type="nucleotide sequence ID" value="NC_006998.1"/>
</dbReference>
<dbReference type="SMR" id="Q01227"/>
<dbReference type="IntAct" id="Q01227">
    <property type="interactions" value="3"/>
</dbReference>
<dbReference type="MINT" id="Q01227"/>
<dbReference type="GlyCosmos" id="Q01227">
    <property type="glycosylation" value="3 sites, No reported glycans"/>
</dbReference>
<dbReference type="ABCD" id="Q01227">
    <property type="antibodies" value="5 sequenced antibodies"/>
</dbReference>
<dbReference type="DNASU" id="3707658"/>
<dbReference type="GeneID" id="3707658"/>
<dbReference type="KEGG" id="vg:3707658"/>
<dbReference type="Proteomes" id="UP000000344">
    <property type="component" value="Genome"/>
</dbReference>
<dbReference type="GO" id="GO:0044177">
    <property type="term" value="C:host cell Golgi apparatus"/>
    <property type="evidence" value="ECO:0007669"/>
    <property type="project" value="UniProtKB-SubCell"/>
</dbReference>
<dbReference type="GO" id="GO:0016020">
    <property type="term" value="C:membrane"/>
    <property type="evidence" value="ECO:0007669"/>
    <property type="project" value="UniProtKB-KW"/>
</dbReference>
<dbReference type="GO" id="GO:0055036">
    <property type="term" value="C:virion membrane"/>
    <property type="evidence" value="ECO:0007669"/>
    <property type="project" value="UniProtKB-SubCell"/>
</dbReference>
<dbReference type="GO" id="GO:0001848">
    <property type="term" value="F:complement binding"/>
    <property type="evidence" value="ECO:0007669"/>
    <property type="project" value="InterPro"/>
</dbReference>
<dbReference type="GO" id="GO:0045916">
    <property type="term" value="P:negative regulation of complement activation"/>
    <property type="evidence" value="ECO:0007669"/>
    <property type="project" value="InterPro"/>
</dbReference>
<dbReference type="CDD" id="cd00033">
    <property type="entry name" value="CCP"/>
    <property type="match status" value="3"/>
</dbReference>
<dbReference type="Gene3D" id="2.10.70.10">
    <property type="entry name" value="Complement Module, domain 1"/>
    <property type="match status" value="3"/>
</dbReference>
<dbReference type="InterPro" id="IPR011176">
    <property type="entry name" value="CCP_VACV_C3/B5"/>
</dbReference>
<dbReference type="InterPro" id="IPR051503">
    <property type="entry name" value="ComplSys_Reg/VirEntry_Med"/>
</dbReference>
<dbReference type="InterPro" id="IPR035976">
    <property type="entry name" value="Sushi/SCR/CCP_sf"/>
</dbReference>
<dbReference type="InterPro" id="IPR000436">
    <property type="entry name" value="Sushi_SCR_CCP_dom"/>
</dbReference>
<dbReference type="PANTHER" id="PTHR45785">
    <property type="entry name" value="COMPLEMENT FACTOR H-RELATED"/>
    <property type="match status" value="1"/>
</dbReference>
<dbReference type="PANTHER" id="PTHR45785:SF2">
    <property type="entry name" value="COMPLEMENT FACTOR H-RELATED"/>
    <property type="match status" value="1"/>
</dbReference>
<dbReference type="Pfam" id="PF00084">
    <property type="entry name" value="Sushi"/>
    <property type="match status" value="3"/>
</dbReference>
<dbReference type="PIRSF" id="PIRSF002486">
    <property type="entry name" value="CIP_VAC_C3L"/>
    <property type="match status" value="1"/>
</dbReference>
<dbReference type="SMART" id="SM00032">
    <property type="entry name" value="CCP"/>
    <property type="match status" value="4"/>
</dbReference>
<dbReference type="SUPFAM" id="SSF57535">
    <property type="entry name" value="Complement control module/SCR domain"/>
    <property type="match status" value="3"/>
</dbReference>
<dbReference type="PROSITE" id="PS50923">
    <property type="entry name" value="SUSHI"/>
    <property type="match status" value="3"/>
</dbReference>
<comment type="function">
    <text evidence="5 6">Plays a role in the dissolution of the outermost membrane of extracellular enveloped virions (EV) to allow virion entry into host cells. Also participates in wrapping mature virions (MV) to form enveloped virions (EV).</text>
</comment>
<comment type="subunit">
    <text evidence="4 7">Interacts with OPG161; this interaction is required for efficient targeting of OPG161 and OPG190 into enveloped virions. Interacts with OPG162; this interaction is required for the correct glycosylation, trafficking and stability of OPG162 and OPG190 incorporation into extracellular enveloped virions. Interacts with envelope phospholipase OPG057.</text>
</comment>
<comment type="subcellular location">
    <subcellularLocation>
        <location evidence="3 7">Virion membrane</location>
        <topology evidence="8">Single-pass type I membrane protein</topology>
    </subcellularLocation>
    <subcellularLocation>
        <location evidence="7">Host Golgi apparatus</location>
        <location evidence="7">Host trans-Golgi network</location>
    </subcellularLocation>
    <text>OPG190 is found on enveloped virion (EV) membranes.</text>
</comment>
<comment type="similarity">
    <text evidence="8">Belongs to the receptors of complement activation (RCA) family.</text>
</comment>
<feature type="signal peptide" evidence="1">
    <location>
        <begin position="1"/>
        <end position="17"/>
    </location>
</feature>
<feature type="chain" id="PRO_0000006020" description="Protein OPG190">
    <location>
        <begin position="18"/>
        <end position="317"/>
    </location>
</feature>
<feature type="topological domain" description="Virion surface" evidence="1">
    <location>
        <begin position="18"/>
        <end position="279"/>
    </location>
</feature>
<feature type="transmembrane region" description="Helical" evidence="1">
    <location>
        <begin position="280"/>
        <end position="300"/>
    </location>
</feature>
<feature type="topological domain" description="Intravirion" evidence="1">
    <location>
        <begin position="301"/>
        <end position="317"/>
    </location>
</feature>
<feature type="domain" description="Sushi 1" evidence="2">
    <location>
        <begin position="19"/>
        <end position="74"/>
    </location>
</feature>
<feature type="domain" description="Sushi 2" evidence="2">
    <location>
        <begin position="75"/>
        <end position="126"/>
    </location>
</feature>
<feature type="domain" description="Sushi 3" evidence="2">
    <location>
        <begin position="127"/>
        <end position="184"/>
    </location>
</feature>
<feature type="domain" description="Sushi 4" evidence="2">
    <location>
        <begin position="185"/>
        <end position="239"/>
    </location>
</feature>
<feature type="lipid moiety-binding region" description="S-palmitoyl cysteine; by host" evidence="7">
    <location>
        <position position="301"/>
    </location>
</feature>
<feature type="lipid moiety-binding region" description="S-palmitoyl cysteine; by host" evidence="7">
    <location>
        <position position="303"/>
    </location>
</feature>
<feature type="glycosylation site" description="N-linked (GlcNAc...) asparagine; by host" evidence="1">
    <location>
        <position position="94"/>
    </location>
</feature>
<feature type="glycosylation site" description="N-linked (GlcNAc...) asparagine; by host" evidence="1">
    <location>
        <position position="116"/>
    </location>
</feature>
<feature type="glycosylation site" description="N-linked (GlcNAc...) asparagine; by host" evidence="1">
    <location>
        <position position="120"/>
    </location>
</feature>
<feature type="disulfide bond" evidence="2">
    <location>
        <begin position="21"/>
        <end position="61"/>
    </location>
</feature>
<feature type="disulfide bond" evidence="2">
    <location>
        <begin position="48"/>
        <end position="72"/>
    </location>
</feature>
<feature type="disulfide bond" evidence="2">
    <location>
        <begin position="76"/>
        <end position="110"/>
    </location>
</feature>
<feature type="disulfide bond" evidence="2">
    <location>
        <begin position="101"/>
        <end position="125"/>
    </location>
</feature>
<feature type="disulfide bond" evidence="2">
    <location>
        <begin position="130"/>
        <end position="171"/>
    </location>
</feature>
<feature type="disulfide bond" evidence="2">
    <location>
        <begin position="157"/>
        <end position="182"/>
    </location>
</feature>
<feature type="disulfide bond" evidence="2">
    <location>
        <begin position="186"/>
        <end position="225"/>
    </location>
</feature>
<feature type="disulfide bond" evidence="2">
    <location>
        <begin position="211"/>
        <end position="237"/>
    </location>
</feature>
<feature type="mutagenesis site" description="Complete loss of palmitoylation." evidence="7">
    <original>CSC</original>
    <variation>SSS</variation>
    <location>
        <begin position="301"/>
        <end position="303"/>
    </location>
</feature>
<evidence type="ECO:0000255" key="1"/>
<evidence type="ECO:0000255" key="2">
    <source>
        <dbReference type="PROSITE-ProRule" id="PRU00302"/>
    </source>
</evidence>
<evidence type="ECO:0000269" key="3">
    <source>
    </source>
</evidence>
<evidence type="ECO:0000269" key="4">
    <source>
    </source>
</evidence>
<evidence type="ECO:0000269" key="5">
    <source>
    </source>
</evidence>
<evidence type="ECO:0000269" key="6">
    <source>
    </source>
</evidence>
<evidence type="ECO:0000269" key="7">
    <source>
    </source>
</evidence>
<evidence type="ECO:0000305" key="8"/>
<organism>
    <name type="scientific">Vaccinia virus (strain Western Reserve)</name>
    <name type="common">VACV</name>
    <name type="synonym">Vaccinia virus (strain WR)</name>
    <dbReference type="NCBI Taxonomy" id="10254"/>
    <lineage>
        <taxon>Viruses</taxon>
        <taxon>Varidnaviria</taxon>
        <taxon>Bamfordvirae</taxon>
        <taxon>Nucleocytoviricota</taxon>
        <taxon>Pokkesviricetes</taxon>
        <taxon>Chitovirales</taxon>
        <taxon>Poxviridae</taxon>
        <taxon>Chordopoxvirinae</taxon>
        <taxon>Orthopoxvirus</taxon>
        <taxon>Vaccinia virus</taxon>
    </lineage>
</organism>
<sequence>MKTISVVTLLCVLPAVVYSTCTVPTMNNAKLTSTETSFNDKQKVTFTCDQGYHSSDPNAVCETDKWKYENPCKKMCTVSDYISELYNKPLYEVNSTMTLSCNGETKYFRCEEKNGNTSWNDTVTCPNAECQPLQLEHGSCQPVKEKYSFGEYMTINCDVGYEVIGASYISCTANSWNVIPSCQQKCDMPSLSNGLISGSTFSIGGVIHLSCKSGFTLTGSPSSTCIDGKWNPVLPICVRTNEEFDPVDDGPDDETDLSKLSKDVVQYEQEIESLEATYHIIIVALTIMGVIFLISVIVLVCSCDKNNDQYKFHKLLP</sequence>
<proteinExistence type="evidence at protein level"/>
<organismHost>
    <name type="scientific">Bos taurus</name>
    <name type="common">Bovine</name>
    <dbReference type="NCBI Taxonomy" id="9913"/>
</organismHost>
<gene>
    <name type="primary">OPG190</name>
    <name type="synonym">PS/HR</name>
    <name type="ordered locus">VACWR187</name>
    <name type="ORF">B5R</name>
</gene>
<reference key="1">
    <citation type="journal article" date="1991" name="J. Gen. Virol.">
        <title>Nucleotide sequence of 42 kbp of vaccinia virus strain WR from near the right inverted terminal repeat.</title>
        <authorList>
            <person name="Smith G.L."/>
            <person name="Chan Y.S."/>
            <person name="Howard S.T."/>
        </authorList>
    </citation>
    <scope>NUCLEOTIDE SEQUENCE [GENOMIC DNA]</scope>
</reference>
<reference key="2">
    <citation type="submission" date="2003-02" db="EMBL/GenBank/DDBJ databases">
        <title>Sequencing of the coding region of Vaccinia-WR to an average 9-fold redundancy and an error rate of 0.16/10kb.</title>
        <authorList>
            <person name="Esposito J.J."/>
            <person name="Frace A.M."/>
            <person name="Sammons S.A."/>
            <person name="Olsen-Rasmussen M."/>
            <person name="Osborne J."/>
            <person name="Wohlhueter R."/>
        </authorList>
    </citation>
    <scope>NUCLEOTIDE SEQUENCE [LARGE SCALE GENOMIC DNA]</scope>
</reference>
<reference key="3">
    <citation type="journal article" date="1992" name="Virology">
        <title>A constitutively expressed vaccinia gene encodes a 42-kDa glycoprotein related to complement control factors that forms part of the extracellular virus envelope.</title>
        <authorList>
            <person name="Engelstad M."/>
            <person name="Howard S.T."/>
            <person name="Smith G.L."/>
        </authorList>
    </citation>
    <scope>SUBCELLULAR LOCATION</scope>
</reference>
<reference key="4">
    <citation type="journal article" date="2006" name="J. Virol.">
        <title>Interaction between vaccinia virus extracellular virus envelope A33 and B5 glycoproteins.</title>
        <authorList>
            <person name="Perdiguero B."/>
            <person name="Blasco R."/>
        </authorList>
    </citation>
    <scope>INTERACTION WITH PROTEIN OPG161</scope>
</reference>
<reference key="5">
    <citation type="journal article" date="2006" name="Virol. J.">
        <title>Pox proteomics: mass spectrometry analysis and identification of Vaccinia virion proteins.</title>
        <authorList>
            <person name="Yoder J.D."/>
            <person name="Chen T.S."/>
            <person name="Gagnier C.R."/>
            <person name="Vemulapalli S."/>
            <person name="Maier C.S."/>
            <person name="Hruby D.E."/>
        </authorList>
    </citation>
    <scope>IDENTIFICATION BY MASS SPECTROMETRY</scope>
</reference>
<reference key="6">
    <citation type="journal article" date="2009" name="J. Gen. Virol.">
        <title>Acidic residues in the membrane-proximal stalk region of vaccinia virus protein B5 are required for glycosaminoglycan-mediated disruption of the extracellular enveloped virus outer membrane.</title>
        <authorList>
            <person name="Roberts K.L."/>
            <person name="Breiman A."/>
            <person name="Carter G.C."/>
            <person name="Ewles H.A."/>
            <person name="Hollinshead M."/>
            <person name="Law M."/>
            <person name="Smith G.L."/>
        </authorList>
    </citation>
    <scope>FUNCTION</scope>
</reference>
<reference key="7">
    <citation type="journal article" date="2010" name="J. Gen. Virol.">
        <title>Vaccinia virus B5 protein affects the glycosylation, localization and stability of the A34 protein.</title>
        <authorList>
            <person name="Breiman A."/>
            <person name="Smith G.L."/>
        </authorList>
    </citation>
    <scope>FUNCTION</scope>
</reference>
<reference key="8">
    <citation type="journal article" date="2012" name="J. Gen. Virol.">
        <title>Mutagenesis of the palmitoylation site in vaccinia virus envelope glycoprotein B5.</title>
        <authorList>
            <person name="Lorenzo M.M."/>
            <person name="Sanchez-Puig J.M."/>
            <person name="Blasco R."/>
        </authorList>
    </citation>
    <scope>PALMITOYLATION AT CYS-301 AND CYS-303</scope>
    <scope>SUBCELLULAR LOCATION</scope>
    <scope>INTERACTION WITH OPG161; OPG162 AND ENVELOPE PHOSPHOLIPASE F13</scope>
    <scope>MUTAGENESIS OF 301-CYS--CYS-303</scope>
</reference>
<keyword id="KW-1015">Disulfide bond</keyword>
<keyword id="KW-0244">Early protein</keyword>
<keyword id="KW-0325">Glycoprotein</keyword>
<keyword id="KW-1040">Host Golgi apparatus</keyword>
<keyword id="KW-0449">Lipoprotein</keyword>
<keyword id="KW-0472">Membrane</keyword>
<keyword id="KW-0564">Palmitate</keyword>
<keyword id="KW-1185">Reference proteome</keyword>
<keyword id="KW-0677">Repeat</keyword>
<keyword id="KW-0732">Signal</keyword>
<keyword id="KW-0768">Sushi</keyword>
<keyword id="KW-0812">Transmembrane</keyword>
<keyword id="KW-1133">Transmembrane helix</keyword>
<keyword id="KW-0946">Virion</keyword>
<name>PG190_VACCW</name>
<protein>
    <recommendedName>
        <fullName>Protein OPG190</fullName>
    </recommendedName>
    <alternativeName>
        <fullName>Plaque-size/host range protein</fullName>
    </alternativeName>
</protein>